<proteinExistence type="inferred from homology"/>
<name>PB2_I06A0</name>
<dbReference type="EMBL" id="CY034131">
    <property type="protein sequence ID" value="ACF54597.1"/>
    <property type="molecule type" value="Viral_cRNA"/>
</dbReference>
<dbReference type="SMR" id="B4URE6"/>
<dbReference type="PRO" id="PR:B4URE6"/>
<dbReference type="Proteomes" id="UP000008081">
    <property type="component" value="Genome"/>
</dbReference>
<dbReference type="GO" id="GO:0033650">
    <property type="term" value="C:host cell mitochondrion"/>
    <property type="evidence" value="ECO:0007669"/>
    <property type="project" value="UniProtKB-SubCell"/>
</dbReference>
<dbReference type="GO" id="GO:0042025">
    <property type="term" value="C:host cell nucleus"/>
    <property type="evidence" value="ECO:0007669"/>
    <property type="project" value="UniProtKB-SubCell"/>
</dbReference>
<dbReference type="GO" id="GO:0044423">
    <property type="term" value="C:virion component"/>
    <property type="evidence" value="ECO:0007669"/>
    <property type="project" value="UniProtKB-UniRule"/>
</dbReference>
<dbReference type="GO" id="GO:0003723">
    <property type="term" value="F:RNA binding"/>
    <property type="evidence" value="ECO:0007669"/>
    <property type="project" value="UniProtKB-UniRule"/>
</dbReference>
<dbReference type="GO" id="GO:0003968">
    <property type="term" value="F:RNA-directed RNA polymerase activity"/>
    <property type="evidence" value="ECO:0007669"/>
    <property type="project" value="UniProtKB-UniRule"/>
</dbReference>
<dbReference type="GO" id="GO:0006370">
    <property type="term" value="P:7-methylguanosine mRNA capping"/>
    <property type="evidence" value="ECO:0007669"/>
    <property type="project" value="UniProtKB-UniRule"/>
</dbReference>
<dbReference type="GO" id="GO:0075526">
    <property type="term" value="P:cap snatching"/>
    <property type="evidence" value="ECO:0007669"/>
    <property type="project" value="UniProtKB-UniRule"/>
</dbReference>
<dbReference type="GO" id="GO:0006351">
    <property type="term" value="P:DNA-templated transcription"/>
    <property type="evidence" value="ECO:0007669"/>
    <property type="project" value="UniProtKB-UniRule"/>
</dbReference>
<dbReference type="GO" id="GO:0039545">
    <property type="term" value="P:symbiont-mediated suppression of host cytoplasmic pattern recognition receptor signaling pathway via inhibition of MAVS activity"/>
    <property type="evidence" value="ECO:0007669"/>
    <property type="project" value="UniProtKB-UniRule"/>
</dbReference>
<dbReference type="GO" id="GO:0039657">
    <property type="term" value="P:symbiont-mediated suppression of host gene expression"/>
    <property type="evidence" value="ECO:0007669"/>
    <property type="project" value="UniProtKB-KW"/>
</dbReference>
<dbReference type="GO" id="GO:0039523">
    <property type="term" value="P:symbiont-mediated suppression of host mRNA transcription via inhibition of RNA polymerase II activity"/>
    <property type="evidence" value="ECO:0007669"/>
    <property type="project" value="UniProtKB-UniRule"/>
</dbReference>
<dbReference type="GO" id="GO:0039694">
    <property type="term" value="P:viral RNA genome replication"/>
    <property type="evidence" value="ECO:0007669"/>
    <property type="project" value="InterPro"/>
</dbReference>
<dbReference type="FunFam" id="3.30.30.90:FF:000001">
    <property type="entry name" value="Polymerase basic protein 2"/>
    <property type="match status" value="1"/>
</dbReference>
<dbReference type="Gene3D" id="3.30.30.90">
    <property type="entry name" value="Polymerase Basic Protein 2, C-terminal domain"/>
    <property type="match status" value="1"/>
</dbReference>
<dbReference type="HAMAP" id="MF_04062">
    <property type="entry name" value="INV_PB2"/>
    <property type="match status" value="1"/>
</dbReference>
<dbReference type="InterPro" id="IPR049110">
    <property type="entry name" value="Flu_PB2_2nd"/>
</dbReference>
<dbReference type="InterPro" id="IPR049114">
    <property type="entry name" value="Flu_PB2_6th"/>
</dbReference>
<dbReference type="InterPro" id="IPR049115">
    <property type="entry name" value="Flu_PB2_C"/>
</dbReference>
<dbReference type="InterPro" id="IPR048298">
    <property type="entry name" value="Flu_PB2_CAP-bd"/>
</dbReference>
<dbReference type="InterPro" id="IPR049111">
    <property type="entry name" value="Flu_PB2_middle"/>
</dbReference>
<dbReference type="InterPro" id="IPR049106">
    <property type="entry name" value="Flu_PB2_N"/>
</dbReference>
<dbReference type="InterPro" id="IPR001591">
    <property type="entry name" value="INV_PB2"/>
</dbReference>
<dbReference type="InterPro" id="IPR049113">
    <property type="entry name" value="PB2_helical"/>
</dbReference>
<dbReference type="InterPro" id="IPR037258">
    <property type="entry name" value="PDB2_C"/>
</dbReference>
<dbReference type="Pfam" id="PF20947">
    <property type="entry name" value="Flu_PB2_1st"/>
    <property type="match status" value="1"/>
</dbReference>
<dbReference type="Pfam" id="PF20948">
    <property type="entry name" value="Flu_PB2_2nd"/>
    <property type="match status" value="1"/>
</dbReference>
<dbReference type="Pfam" id="PF20949">
    <property type="entry name" value="Flu_PB2_3rd"/>
    <property type="match status" value="1"/>
</dbReference>
<dbReference type="Pfam" id="PF20950">
    <property type="entry name" value="Flu_PB2_4th"/>
    <property type="match status" value="1"/>
</dbReference>
<dbReference type="Pfam" id="PF00604">
    <property type="entry name" value="Flu_PB2_5th"/>
    <property type="match status" value="1"/>
</dbReference>
<dbReference type="Pfam" id="PF20951">
    <property type="entry name" value="Flu_PB2_6th"/>
    <property type="match status" value="1"/>
</dbReference>
<dbReference type="Pfam" id="PF20952">
    <property type="entry name" value="Flu_PB2_7th"/>
    <property type="match status" value="1"/>
</dbReference>
<dbReference type="SUPFAM" id="SSF160453">
    <property type="entry name" value="PB2 C-terminal domain-like"/>
    <property type="match status" value="1"/>
</dbReference>
<feature type="chain" id="PRO_0000373028" description="Polymerase basic protein 2">
    <location>
        <begin position="1"/>
        <end position="759"/>
    </location>
</feature>
<feature type="short sequence motif" description="Nuclear localization signal" evidence="1">
    <location>
        <begin position="736"/>
        <end position="739"/>
    </location>
</feature>
<feature type="site" description="Mammalian adaptation" evidence="1">
    <location>
        <position position="627"/>
    </location>
</feature>
<organism>
    <name type="scientific">Influenza A virus (strain A/Russia:St.Petersburg/8/2006 H1N1)</name>
    <dbReference type="NCBI Taxonomy" id="518998"/>
    <lineage>
        <taxon>Viruses</taxon>
        <taxon>Riboviria</taxon>
        <taxon>Orthornavirae</taxon>
        <taxon>Negarnaviricota</taxon>
        <taxon>Polyploviricotina</taxon>
        <taxon>Insthoviricetes</taxon>
        <taxon>Articulavirales</taxon>
        <taxon>Orthomyxoviridae</taxon>
        <taxon>Alphainfluenzavirus</taxon>
        <taxon>Alphainfluenzavirus influenzae</taxon>
        <taxon>Influenza A virus</taxon>
    </lineage>
</organism>
<gene>
    <name evidence="1" type="primary">PB2</name>
</gene>
<keyword id="KW-1157">Cap snatching</keyword>
<keyword id="KW-1262">Eukaryotic host gene expression shutoff by virus</keyword>
<keyword id="KW-1191">Eukaryotic host transcription shutoff by virus</keyword>
<keyword id="KW-1190">Host gene expression shutoff by virus</keyword>
<keyword id="KW-1045">Host mitochondrion</keyword>
<keyword id="KW-1048">Host nucleus</keyword>
<keyword id="KW-0945">Host-virus interaction</keyword>
<keyword id="KW-1090">Inhibition of host innate immune response by virus</keyword>
<keyword id="KW-1097">Inhibition of host MAVS by virus</keyword>
<keyword id="KW-1113">Inhibition of host RLR pathway by virus</keyword>
<keyword id="KW-1104">Inhibition of host RNA polymerase II by virus</keyword>
<keyword id="KW-0506">mRNA capping</keyword>
<keyword id="KW-0507">mRNA processing</keyword>
<keyword id="KW-0899">Viral immunoevasion</keyword>
<keyword id="KW-1195">Viral transcription</keyword>
<keyword id="KW-0946">Virion</keyword>
<comment type="function">
    <text evidence="1">Plays an essential role in transcription initiation and cap-stealing mechanism, in which cellular capped pre-mRNAs are used to generate primers for viral transcription. Recognizes and binds the 7-methylguanosine-containing cap of the target pre-RNA which is subsequently cleaved after 10-13 nucleotides by the viral protein PA. Plays a role in the initiation of the viral genome replication and modulates the activity of the ribonucleoprotein (RNP) complex. In addition, participates in the inhibition of type I interferon induction through interaction with and inhibition of the host mitochondrial antiviral signaling protein MAVS.</text>
</comment>
<comment type="subunit">
    <text evidence="1">Influenza RNA polymerase is composed of three subunits: PB1, PB2 and PA. Interacts (via N-terminus) with PB1 (via C-terminus). Interacts with nucleoprotein NP (via N-terminus). Interacts (via N-terminus) with host MAVS (via N-terminus); this interaction inhibits host innate immune response.</text>
</comment>
<comment type="subcellular location">
    <subcellularLocation>
        <location evidence="1">Virion</location>
    </subcellularLocation>
    <subcellularLocation>
        <location evidence="1">Host nucleus</location>
    </subcellularLocation>
    <subcellularLocation>
        <location evidence="1">Host mitochondrion</location>
    </subcellularLocation>
</comment>
<comment type="similarity">
    <text evidence="1">Belongs to the influenza viruses PB2 family.</text>
</comment>
<accession>B4URE6</accession>
<protein>
    <recommendedName>
        <fullName evidence="1">Polymerase basic protein 2</fullName>
    </recommendedName>
    <alternativeName>
        <fullName evidence="1">RNA-directed RNA polymerase subunit P3</fullName>
    </alternativeName>
</protein>
<organismHost>
    <name type="scientific">Aves</name>
    <dbReference type="NCBI Taxonomy" id="8782"/>
</organismHost>
<organismHost>
    <name type="scientific">Homo sapiens</name>
    <name type="common">Human</name>
    <dbReference type="NCBI Taxonomy" id="9606"/>
</organismHost>
<organismHost>
    <name type="scientific">Sus scrofa</name>
    <name type="common">Pig</name>
    <dbReference type="NCBI Taxonomy" id="9823"/>
</organismHost>
<sequence>MERIKELRNLMSQSRTREILTKTTVDHMAIIKKYTSGRQEKNPALRMKWMMAMKYPITADKRITEMIPERNEQGQTLWSKMNDAGSDRVMVSPLAVTWWNRNGPITNTVHYPKIYKTYFERVERLKHGTFGPVHFRNQVKIRRRVDINPGHADLSAKEAQDVIMEVVFPNEVGARILTSESQLTITKEKKEELQDCKISPLMVAYMLERELVRKTRFLPVAGGTSSVYIEVLHLTQGTCWEQMYTPGGEVRNDDVDQSLIIAARNIVRRAAVSADPLASLLEMCHSTQIGGIRMVDILRQNPTEEQAVDICKAAMGLRISSSFSFGGFTFKRTSGSSVKREEEVLTGNLQTLKIRVHEGYEEFTMVGRRATAILRKATRRLIQLIVSGRDEQSIAEAIIVAMVFSQEDCMIKAVRGDLNFVNRANQRLNPMHQLLRHFQKDAKVLFQNWGVEPIDNVMGMIGILPDMTPSIEMSMRGVRISKMGVDEYSSTERVVVSIDRFLRIRDQRGNVLLSPEEVSETQGTEKLTITYSSSMMWEINGPESVLVNTYQWIIRNWETVKIQWSQNPTMLYNKMEFEPFQSLVPKAIRGQYSGFVRTLFQQMRDVLGTFDTAQIIKLLPFAAAPPKQSRMQFSSFTVNVRGSGMRILVRGNSPVFNYNKATKRLTVLGKDAGTLTEDPDEGTAGVESAVLRGFLILGKEDKRYGPALSINELSNLAKGEKANVLIGQGDVVLVMKRKRDSSILTDSQTATKRIRMAIN</sequence>
<reference key="1">
    <citation type="submission" date="2008-07" db="EMBL/GenBank/DDBJ databases">
        <title>The NIAID influenza genome sequencing project.</title>
        <authorList>
            <person name="Spiro D."/>
            <person name="Halpin R."/>
            <person name="Boyne A."/>
            <person name="Bera J."/>
            <person name="Ghedin E."/>
            <person name="Hostetler J."/>
            <person name="Fedorova N."/>
            <person name="Hine E."/>
            <person name="Overton L."/>
            <person name="Djuric K."/>
            <person name="Sarmiento M."/>
            <person name="Sitz J."/>
            <person name="Katzel D."/>
            <person name="Manojkumar R."/>
            <person name="Devis R."/>
            <person name="Fulvini A."/>
            <person name="Silverman J."/>
            <person name="Le J."/>
            <person name="Kilbourne E.D."/>
            <person name="Pokorny B."/>
            <person name="Bucher D."/>
            <person name="Orff E."/>
            <person name="Minieri J."/>
            <person name="Onodera S."/>
            <person name="Huang L."/>
            <person name="Bao Y."/>
            <person name="Sanders R."/>
            <person name="Dernovoy D."/>
            <person name="Kiryutin B."/>
            <person name="Lipman D.J."/>
            <person name="Tatusova T."/>
        </authorList>
    </citation>
    <scope>NUCLEOTIDE SEQUENCE [GENOMIC RNA]</scope>
</reference>
<reference key="2">
    <citation type="submission" date="2008-07" db="EMBL/GenBank/DDBJ databases">
        <authorList>
            <consortium name="The NIAID Influenza Genome Sequencing Consortium"/>
        </authorList>
    </citation>
    <scope>NUCLEOTIDE SEQUENCE [GENOMIC RNA]</scope>
</reference>
<evidence type="ECO:0000255" key="1">
    <source>
        <dbReference type="HAMAP-Rule" id="MF_04062"/>
    </source>
</evidence>